<sequence length="467" mass="51966">MAADTRAKAVTLDLRRRLLSSSCRLFFPEDPVKIIRGQGQYLYDEQGREYLDCINNVAHVGHCHPTVVQAAHEQNLVLNTNSRYLHDNIVDYAQRLSETLPEQLSVFYFLNSGSEANDLALRLARQYTGHQDVVVLDHAYHGHLSSLIDISPYKFRNLGGQKEWVHVAPLPDTYRGPYREDHPNPAEAYANEVKHVISSAQQKGRKIAAFFAESLPSVSGQIIPPAGYFSQVAEHIHRAGGLFVADEIQVGFGRIGKHFWAFQLEGEDFVPDIVTMGKSIGNGHPVACMATTQAVSRAFEATGVEYFNTFGGNPVSCAVGLAVLDVLKTEQLQAHATNVGSFLLEHLTQQKAKHPIIGDVRGTGLFIGVDLIKDETLRTPATEEAEYLVSRLKENYILLSIDGPGKNILKFKPPMCFNVDNAQHVVAKLDDILTDMEEKVRSCETLRIKHPPEDTHPTQILLTRQQD</sequence>
<name>AT2L2_MOUSE</name>
<proteinExistence type="evidence at protein level"/>
<gene>
    <name type="primary">Phykpl</name>
    <name type="synonym">Agxt2l2</name>
</gene>
<dbReference type="EC" id="4.2.3.134" evidence="2"/>
<dbReference type="EMBL" id="AK085984">
    <property type="protein sequence ID" value="BAC39584.1"/>
    <property type="molecule type" value="mRNA"/>
</dbReference>
<dbReference type="EMBL" id="AK087703">
    <property type="protein sequence ID" value="BAC39972.1"/>
    <property type="molecule type" value="mRNA"/>
</dbReference>
<dbReference type="EMBL" id="AK133235">
    <property type="protein sequence ID" value="BAE21570.1"/>
    <property type="molecule type" value="mRNA"/>
</dbReference>
<dbReference type="EMBL" id="AK160557">
    <property type="protein sequence ID" value="BAE35872.1"/>
    <property type="molecule type" value="mRNA"/>
</dbReference>
<dbReference type="EMBL" id="AL645602">
    <property type="status" value="NOT_ANNOTATED_CDS"/>
    <property type="molecule type" value="Genomic_DNA"/>
</dbReference>
<dbReference type="EMBL" id="AL662843">
    <property type="status" value="NOT_ANNOTATED_CDS"/>
    <property type="molecule type" value="Genomic_DNA"/>
</dbReference>
<dbReference type="EMBL" id="BC024461">
    <property type="protein sequence ID" value="AAH24461.1"/>
    <property type="molecule type" value="mRNA"/>
</dbReference>
<dbReference type="CCDS" id="CCDS24653.1">
    <molecule id="Q8R1K4-1"/>
</dbReference>
<dbReference type="RefSeq" id="NP_001369750.1">
    <molecule id="Q8R1K4-2"/>
    <property type="nucleotide sequence ID" value="NM_001382821.1"/>
</dbReference>
<dbReference type="RefSeq" id="NP_082674.1">
    <molecule id="Q8R1K4-1"/>
    <property type="nucleotide sequence ID" value="NM_028398.3"/>
</dbReference>
<dbReference type="SMR" id="Q8R1K4"/>
<dbReference type="FunCoup" id="Q8R1K4">
    <property type="interactions" value="1147"/>
</dbReference>
<dbReference type="STRING" id="10090.ENSMUSP00000132190"/>
<dbReference type="iPTMnet" id="Q8R1K4"/>
<dbReference type="PhosphoSitePlus" id="Q8R1K4"/>
<dbReference type="jPOST" id="Q8R1K4"/>
<dbReference type="PaxDb" id="10090-ENSMUSP00000132190"/>
<dbReference type="PeptideAtlas" id="Q8R1K4"/>
<dbReference type="ProteomicsDB" id="277266">
    <molecule id="Q8R1K4-1"/>
</dbReference>
<dbReference type="ProteomicsDB" id="277267">
    <molecule id="Q8R1K4-2"/>
</dbReference>
<dbReference type="ProteomicsDB" id="277268">
    <molecule id="Q8R1K4-3"/>
</dbReference>
<dbReference type="Pumba" id="Q8R1K4"/>
<dbReference type="Antibodypedia" id="29429">
    <property type="antibodies" value="149 antibodies from 26 providers"/>
</dbReference>
<dbReference type="DNASU" id="72947"/>
<dbReference type="Ensembl" id="ENSMUST00000020625.7">
    <molecule id="Q8R1K4-2"/>
    <property type="protein sequence ID" value="ENSMUSP00000020625.7"/>
    <property type="gene ID" value="ENSMUSG00000020359.14"/>
</dbReference>
<dbReference type="Ensembl" id="ENSMUST00000167797.8">
    <molecule id="Q8R1K4-1"/>
    <property type="protein sequence ID" value="ENSMUSP00000132190.2"/>
    <property type="gene ID" value="ENSMUSG00000020359.14"/>
</dbReference>
<dbReference type="GeneID" id="72947"/>
<dbReference type="KEGG" id="mmu:72947"/>
<dbReference type="UCSC" id="uc007itw.1">
    <molecule id="Q8R1K4-3"/>
    <property type="organism name" value="mouse"/>
</dbReference>
<dbReference type="UCSC" id="uc007itx.1">
    <molecule id="Q8R1K4-2"/>
    <property type="organism name" value="mouse"/>
</dbReference>
<dbReference type="UCSC" id="uc007ity.1">
    <molecule id="Q8R1K4-1"/>
    <property type="organism name" value="mouse"/>
</dbReference>
<dbReference type="AGR" id="MGI:1920197"/>
<dbReference type="CTD" id="85007"/>
<dbReference type="MGI" id="MGI:1920197">
    <property type="gene designation" value="Phykpl"/>
</dbReference>
<dbReference type="VEuPathDB" id="HostDB:ENSMUSG00000020359"/>
<dbReference type="eggNOG" id="KOG1403">
    <property type="taxonomic scope" value="Eukaryota"/>
</dbReference>
<dbReference type="GeneTree" id="ENSGT00940000159222"/>
<dbReference type="HOGENOM" id="CLU_016922_8_0_1"/>
<dbReference type="InParanoid" id="Q8R1K4"/>
<dbReference type="OMA" id="REGLNQH"/>
<dbReference type="PhylomeDB" id="Q8R1K4"/>
<dbReference type="TreeFam" id="TF320468"/>
<dbReference type="Reactome" id="R-MMU-1442490">
    <property type="pathway name" value="Collagen degradation"/>
</dbReference>
<dbReference type="Reactome" id="R-MMU-71064">
    <property type="pathway name" value="Lysine catabolism"/>
</dbReference>
<dbReference type="BioGRID-ORCS" id="72947">
    <property type="hits" value="0 hits in 77 CRISPR screens"/>
</dbReference>
<dbReference type="ChiTaRS" id="Phykpl">
    <property type="organism name" value="mouse"/>
</dbReference>
<dbReference type="PRO" id="PR:Q8R1K4"/>
<dbReference type="Proteomes" id="UP000000589">
    <property type="component" value="Chromosome 11"/>
</dbReference>
<dbReference type="RNAct" id="Q8R1K4">
    <property type="molecule type" value="protein"/>
</dbReference>
<dbReference type="Bgee" id="ENSMUSG00000020359">
    <property type="expression patterns" value="Expressed in embryonic post-anal tail and 255 other cell types or tissues"/>
</dbReference>
<dbReference type="ExpressionAtlas" id="Q8R1K4">
    <property type="expression patterns" value="baseline and differential"/>
</dbReference>
<dbReference type="GO" id="GO:0005739">
    <property type="term" value="C:mitochondrion"/>
    <property type="evidence" value="ECO:0007005"/>
    <property type="project" value="MGI"/>
</dbReference>
<dbReference type="GO" id="GO:0042802">
    <property type="term" value="F:identical protein binding"/>
    <property type="evidence" value="ECO:0007669"/>
    <property type="project" value="Ensembl"/>
</dbReference>
<dbReference type="GO" id="GO:0016829">
    <property type="term" value="F:lyase activity"/>
    <property type="evidence" value="ECO:0007669"/>
    <property type="project" value="UniProtKB-KW"/>
</dbReference>
<dbReference type="GO" id="GO:0030170">
    <property type="term" value="F:pyridoxal phosphate binding"/>
    <property type="evidence" value="ECO:0007669"/>
    <property type="project" value="InterPro"/>
</dbReference>
<dbReference type="GO" id="GO:0008483">
    <property type="term" value="F:transaminase activity"/>
    <property type="evidence" value="ECO:0007669"/>
    <property type="project" value="InterPro"/>
</dbReference>
<dbReference type="CDD" id="cd00610">
    <property type="entry name" value="OAT_like"/>
    <property type="match status" value="1"/>
</dbReference>
<dbReference type="FunFam" id="3.40.640.10:FF:000058">
    <property type="entry name" value="ethanolamine-phosphate phospho-lyase isoform X1"/>
    <property type="match status" value="1"/>
</dbReference>
<dbReference type="Gene3D" id="3.90.1150.10">
    <property type="entry name" value="Aspartate Aminotransferase, domain 1"/>
    <property type="match status" value="1"/>
</dbReference>
<dbReference type="Gene3D" id="3.40.640.10">
    <property type="entry name" value="Type I PLP-dependent aspartate aminotransferase-like (Major domain)"/>
    <property type="match status" value="1"/>
</dbReference>
<dbReference type="InterPro" id="IPR005814">
    <property type="entry name" value="Aminotrans_3"/>
</dbReference>
<dbReference type="InterPro" id="IPR049704">
    <property type="entry name" value="Aminotrans_3_PPA_site"/>
</dbReference>
<dbReference type="InterPro" id="IPR015424">
    <property type="entry name" value="PyrdxlP-dep_Trfase"/>
</dbReference>
<dbReference type="InterPro" id="IPR015421">
    <property type="entry name" value="PyrdxlP-dep_Trfase_major"/>
</dbReference>
<dbReference type="InterPro" id="IPR015422">
    <property type="entry name" value="PyrdxlP-dep_Trfase_small"/>
</dbReference>
<dbReference type="PANTHER" id="PTHR45688">
    <property type="match status" value="1"/>
</dbReference>
<dbReference type="PANTHER" id="PTHR45688:SF6">
    <property type="entry name" value="5-PHOSPHOHYDROXY-L-LYSINE PHOSPHO-LYASE"/>
    <property type="match status" value="1"/>
</dbReference>
<dbReference type="Pfam" id="PF00202">
    <property type="entry name" value="Aminotran_3"/>
    <property type="match status" value="1"/>
</dbReference>
<dbReference type="PIRSF" id="PIRSF000521">
    <property type="entry name" value="Transaminase_4ab_Lys_Orn"/>
    <property type="match status" value="1"/>
</dbReference>
<dbReference type="SUPFAM" id="SSF53383">
    <property type="entry name" value="PLP-dependent transferases"/>
    <property type="match status" value="1"/>
</dbReference>
<dbReference type="PROSITE" id="PS00600">
    <property type="entry name" value="AA_TRANSFER_CLASS_3"/>
    <property type="match status" value="1"/>
</dbReference>
<evidence type="ECO:0000250" key="1">
    <source>
        <dbReference type="UniProtKB" id="P22256"/>
    </source>
</evidence>
<evidence type="ECO:0000250" key="2">
    <source>
        <dbReference type="UniProtKB" id="Q8IUZ5"/>
    </source>
</evidence>
<evidence type="ECO:0000303" key="3">
    <source>
    </source>
</evidence>
<evidence type="ECO:0000305" key="4"/>
<protein>
    <recommendedName>
        <fullName>5-phosphohydroxy-L-lysine phospho-lyase</fullName>
        <ecNumber evidence="2">4.2.3.134</ecNumber>
    </recommendedName>
    <alternativeName>
        <fullName>Alanine--glyoxylate aminotransferase 2-like 2</fullName>
    </alternativeName>
</protein>
<accession>Q8R1K4</accession>
<accession>Q3TUU9</accession>
<accession>Q8BG04</accession>
<reference key="1">
    <citation type="journal article" date="2005" name="Science">
        <title>The transcriptional landscape of the mammalian genome.</title>
        <authorList>
            <person name="Carninci P."/>
            <person name="Kasukawa T."/>
            <person name="Katayama S."/>
            <person name="Gough J."/>
            <person name="Frith M.C."/>
            <person name="Maeda N."/>
            <person name="Oyama R."/>
            <person name="Ravasi T."/>
            <person name="Lenhard B."/>
            <person name="Wells C."/>
            <person name="Kodzius R."/>
            <person name="Shimokawa K."/>
            <person name="Bajic V.B."/>
            <person name="Brenner S.E."/>
            <person name="Batalov S."/>
            <person name="Forrest A.R."/>
            <person name="Zavolan M."/>
            <person name="Davis M.J."/>
            <person name="Wilming L.G."/>
            <person name="Aidinis V."/>
            <person name="Allen J.E."/>
            <person name="Ambesi-Impiombato A."/>
            <person name="Apweiler R."/>
            <person name="Aturaliya R.N."/>
            <person name="Bailey T.L."/>
            <person name="Bansal M."/>
            <person name="Baxter L."/>
            <person name="Beisel K.W."/>
            <person name="Bersano T."/>
            <person name="Bono H."/>
            <person name="Chalk A.M."/>
            <person name="Chiu K.P."/>
            <person name="Choudhary V."/>
            <person name="Christoffels A."/>
            <person name="Clutterbuck D.R."/>
            <person name="Crowe M.L."/>
            <person name="Dalla E."/>
            <person name="Dalrymple B.P."/>
            <person name="de Bono B."/>
            <person name="Della Gatta G."/>
            <person name="di Bernardo D."/>
            <person name="Down T."/>
            <person name="Engstrom P."/>
            <person name="Fagiolini M."/>
            <person name="Faulkner G."/>
            <person name="Fletcher C.F."/>
            <person name="Fukushima T."/>
            <person name="Furuno M."/>
            <person name="Futaki S."/>
            <person name="Gariboldi M."/>
            <person name="Georgii-Hemming P."/>
            <person name="Gingeras T.R."/>
            <person name="Gojobori T."/>
            <person name="Green R.E."/>
            <person name="Gustincich S."/>
            <person name="Harbers M."/>
            <person name="Hayashi Y."/>
            <person name="Hensch T.K."/>
            <person name="Hirokawa N."/>
            <person name="Hill D."/>
            <person name="Huminiecki L."/>
            <person name="Iacono M."/>
            <person name="Ikeo K."/>
            <person name="Iwama A."/>
            <person name="Ishikawa T."/>
            <person name="Jakt M."/>
            <person name="Kanapin A."/>
            <person name="Katoh M."/>
            <person name="Kawasawa Y."/>
            <person name="Kelso J."/>
            <person name="Kitamura H."/>
            <person name="Kitano H."/>
            <person name="Kollias G."/>
            <person name="Krishnan S.P."/>
            <person name="Kruger A."/>
            <person name="Kummerfeld S.K."/>
            <person name="Kurochkin I.V."/>
            <person name="Lareau L.F."/>
            <person name="Lazarevic D."/>
            <person name="Lipovich L."/>
            <person name="Liu J."/>
            <person name="Liuni S."/>
            <person name="McWilliam S."/>
            <person name="Madan Babu M."/>
            <person name="Madera M."/>
            <person name="Marchionni L."/>
            <person name="Matsuda H."/>
            <person name="Matsuzawa S."/>
            <person name="Miki H."/>
            <person name="Mignone F."/>
            <person name="Miyake S."/>
            <person name="Morris K."/>
            <person name="Mottagui-Tabar S."/>
            <person name="Mulder N."/>
            <person name="Nakano N."/>
            <person name="Nakauchi H."/>
            <person name="Ng P."/>
            <person name="Nilsson R."/>
            <person name="Nishiguchi S."/>
            <person name="Nishikawa S."/>
            <person name="Nori F."/>
            <person name="Ohara O."/>
            <person name="Okazaki Y."/>
            <person name="Orlando V."/>
            <person name="Pang K.C."/>
            <person name="Pavan W.J."/>
            <person name="Pavesi G."/>
            <person name="Pesole G."/>
            <person name="Petrovsky N."/>
            <person name="Piazza S."/>
            <person name="Reed J."/>
            <person name="Reid J.F."/>
            <person name="Ring B.Z."/>
            <person name="Ringwald M."/>
            <person name="Rost B."/>
            <person name="Ruan Y."/>
            <person name="Salzberg S.L."/>
            <person name="Sandelin A."/>
            <person name="Schneider C."/>
            <person name="Schoenbach C."/>
            <person name="Sekiguchi K."/>
            <person name="Semple C.A."/>
            <person name="Seno S."/>
            <person name="Sessa L."/>
            <person name="Sheng Y."/>
            <person name="Shibata Y."/>
            <person name="Shimada H."/>
            <person name="Shimada K."/>
            <person name="Silva D."/>
            <person name="Sinclair B."/>
            <person name="Sperling S."/>
            <person name="Stupka E."/>
            <person name="Sugiura K."/>
            <person name="Sultana R."/>
            <person name="Takenaka Y."/>
            <person name="Taki K."/>
            <person name="Tammoja K."/>
            <person name="Tan S.L."/>
            <person name="Tang S."/>
            <person name="Taylor M.S."/>
            <person name="Tegner J."/>
            <person name="Teichmann S.A."/>
            <person name="Ueda H.R."/>
            <person name="van Nimwegen E."/>
            <person name="Verardo R."/>
            <person name="Wei C.L."/>
            <person name="Yagi K."/>
            <person name="Yamanishi H."/>
            <person name="Zabarovsky E."/>
            <person name="Zhu S."/>
            <person name="Zimmer A."/>
            <person name="Hide W."/>
            <person name="Bult C."/>
            <person name="Grimmond S.M."/>
            <person name="Teasdale R.D."/>
            <person name="Liu E.T."/>
            <person name="Brusic V."/>
            <person name="Quackenbush J."/>
            <person name="Wahlestedt C."/>
            <person name="Mattick J.S."/>
            <person name="Hume D.A."/>
            <person name="Kai C."/>
            <person name="Sasaki D."/>
            <person name="Tomaru Y."/>
            <person name="Fukuda S."/>
            <person name="Kanamori-Katayama M."/>
            <person name="Suzuki M."/>
            <person name="Aoki J."/>
            <person name="Arakawa T."/>
            <person name="Iida J."/>
            <person name="Imamura K."/>
            <person name="Itoh M."/>
            <person name="Kato T."/>
            <person name="Kawaji H."/>
            <person name="Kawagashira N."/>
            <person name="Kawashima T."/>
            <person name="Kojima M."/>
            <person name="Kondo S."/>
            <person name="Konno H."/>
            <person name="Nakano K."/>
            <person name="Ninomiya N."/>
            <person name="Nishio T."/>
            <person name="Okada M."/>
            <person name="Plessy C."/>
            <person name="Shibata K."/>
            <person name="Shiraki T."/>
            <person name="Suzuki S."/>
            <person name="Tagami M."/>
            <person name="Waki K."/>
            <person name="Watahiki A."/>
            <person name="Okamura-Oho Y."/>
            <person name="Suzuki H."/>
            <person name="Kawai J."/>
            <person name="Hayashizaki Y."/>
        </authorList>
    </citation>
    <scope>NUCLEOTIDE SEQUENCE [LARGE SCALE MRNA] (ISOFORMS 1; 2 AND 3)</scope>
    <source>
        <strain>C57BL/6J</strain>
        <tissue>Heart</tissue>
        <tissue>Ovary</tissue>
        <tissue>Testis</tissue>
    </source>
</reference>
<reference key="2">
    <citation type="journal article" date="2009" name="PLoS Biol.">
        <title>Lineage-specific biology revealed by a finished genome assembly of the mouse.</title>
        <authorList>
            <person name="Church D.M."/>
            <person name="Goodstadt L."/>
            <person name="Hillier L.W."/>
            <person name="Zody M.C."/>
            <person name="Goldstein S."/>
            <person name="She X."/>
            <person name="Bult C.J."/>
            <person name="Agarwala R."/>
            <person name="Cherry J.L."/>
            <person name="DiCuccio M."/>
            <person name="Hlavina W."/>
            <person name="Kapustin Y."/>
            <person name="Meric P."/>
            <person name="Maglott D."/>
            <person name="Birtle Z."/>
            <person name="Marques A.C."/>
            <person name="Graves T."/>
            <person name="Zhou S."/>
            <person name="Teague B."/>
            <person name="Potamousis K."/>
            <person name="Churas C."/>
            <person name="Place M."/>
            <person name="Herschleb J."/>
            <person name="Runnheim R."/>
            <person name="Forrest D."/>
            <person name="Amos-Landgraf J."/>
            <person name="Schwartz D.C."/>
            <person name="Cheng Z."/>
            <person name="Lindblad-Toh K."/>
            <person name="Eichler E.E."/>
            <person name="Ponting C.P."/>
        </authorList>
    </citation>
    <scope>NUCLEOTIDE SEQUENCE [LARGE SCALE GENOMIC DNA]</scope>
    <source>
        <strain>C57BL/6J</strain>
    </source>
</reference>
<reference key="3">
    <citation type="journal article" date="2004" name="Genome Res.">
        <title>The status, quality, and expansion of the NIH full-length cDNA project: the Mammalian Gene Collection (MGC).</title>
        <authorList>
            <consortium name="The MGC Project Team"/>
        </authorList>
    </citation>
    <scope>NUCLEOTIDE SEQUENCE [LARGE SCALE MRNA] (ISOFORM 1)</scope>
    <source>
        <strain>FVB/N</strain>
        <tissue>Kidney</tissue>
    </source>
</reference>
<reference key="4">
    <citation type="journal article" date="2010" name="Cell">
        <title>A tissue-specific atlas of mouse protein phosphorylation and expression.</title>
        <authorList>
            <person name="Huttlin E.L."/>
            <person name="Jedrychowski M.P."/>
            <person name="Elias J.E."/>
            <person name="Goswami T."/>
            <person name="Rad R."/>
            <person name="Beausoleil S.A."/>
            <person name="Villen J."/>
            <person name="Haas W."/>
            <person name="Sowa M.E."/>
            <person name="Gygi S.P."/>
        </authorList>
    </citation>
    <scope>IDENTIFICATION BY MASS SPECTROMETRY [LARGE SCALE ANALYSIS]</scope>
    <source>
        <tissue>Heart</tissue>
        <tissue>Lung</tissue>
    </source>
</reference>
<feature type="chain" id="PRO_0000287668" description="5-phosphohydroxy-L-lysine phospho-lyase">
    <location>
        <begin position="1"/>
        <end position="467"/>
    </location>
</feature>
<feature type="modified residue" description="N6-(pyridoxal phosphate)lysine" evidence="1">
    <location>
        <position position="278"/>
    </location>
</feature>
<feature type="splice variant" id="VSP_025586" description="In isoform 3." evidence="3">
    <original>APLPDTYRGPYREDHPN</original>
    <variation>VCIPTISNRSVSIPKPG</variation>
    <location>
        <begin position="168"/>
        <end position="184"/>
    </location>
</feature>
<feature type="splice variant" id="VSP_025587" description="In isoform 3." evidence="3">
    <location>
        <begin position="185"/>
        <end position="467"/>
    </location>
</feature>
<feature type="splice variant" id="VSP_025588" description="In isoform 2." evidence="3">
    <original>EDTHPTQILLTRQQD</original>
    <variation>GSTGPGCRAATGNRPS</variation>
    <location>
        <begin position="453"/>
        <end position="467"/>
    </location>
</feature>
<comment type="function">
    <text evidence="2">Catalyzes the pyridoxal-phosphate-dependent breakdown of 5-phosphohydroxy-L-lysine, converting it to ammonia, inorganic phosphate and 2-aminoadipate semialdehyde.</text>
</comment>
<comment type="catalytic activity">
    <reaction evidence="2">
        <text>(5R)-5-phosphooxy-L-lysine + H2O = (S)-2-amino-6-oxohexanoate + NH4(+) + phosphate</text>
        <dbReference type="Rhea" id="RHEA:34091"/>
        <dbReference type="ChEBI" id="CHEBI:15377"/>
        <dbReference type="ChEBI" id="CHEBI:28938"/>
        <dbReference type="ChEBI" id="CHEBI:43474"/>
        <dbReference type="ChEBI" id="CHEBI:57882"/>
        <dbReference type="ChEBI" id="CHEBI:58321"/>
        <dbReference type="EC" id="4.2.3.134"/>
    </reaction>
</comment>
<comment type="cofactor">
    <cofactor evidence="2">
        <name>pyridoxal 5'-phosphate</name>
        <dbReference type="ChEBI" id="CHEBI:597326"/>
    </cofactor>
</comment>
<comment type="subunit">
    <text evidence="1">Homotetramer.</text>
</comment>
<comment type="subcellular location">
    <subcellularLocation>
        <location evidence="2">Mitochondrion</location>
    </subcellularLocation>
</comment>
<comment type="alternative products">
    <event type="alternative splicing"/>
    <isoform>
        <id>Q8R1K4-1</id>
        <name>1</name>
        <sequence type="displayed"/>
    </isoform>
    <isoform>
        <id>Q8R1K4-2</id>
        <name>2</name>
        <sequence type="described" ref="VSP_025588"/>
    </isoform>
    <isoform>
        <id>Q8R1K4-3</id>
        <name>3</name>
        <sequence type="described" ref="VSP_025586 VSP_025587"/>
    </isoform>
</comment>
<comment type="similarity">
    <text evidence="4">Belongs to the class-III pyridoxal-phosphate-dependent aminotransferase family.</text>
</comment>
<comment type="caution">
    <text evidence="2">Does not seem to possess aminotransferase activity.</text>
</comment>
<organism>
    <name type="scientific">Mus musculus</name>
    <name type="common">Mouse</name>
    <dbReference type="NCBI Taxonomy" id="10090"/>
    <lineage>
        <taxon>Eukaryota</taxon>
        <taxon>Metazoa</taxon>
        <taxon>Chordata</taxon>
        <taxon>Craniata</taxon>
        <taxon>Vertebrata</taxon>
        <taxon>Euteleostomi</taxon>
        <taxon>Mammalia</taxon>
        <taxon>Eutheria</taxon>
        <taxon>Euarchontoglires</taxon>
        <taxon>Glires</taxon>
        <taxon>Rodentia</taxon>
        <taxon>Myomorpha</taxon>
        <taxon>Muroidea</taxon>
        <taxon>Muridae</taxon>
        <taxon>Murinae</taxon>
        <taxon>Mus</taxon>
        <taxon>Mus</taxon>
    </lineage>
</organism>
<keyword id="KW-0025">Alternative splicing</keyword>
<keyword id="KW-0456">Lyase</keyword>
<keyword id="KW-0496">Mitochondrion</keyword>
<keyword id="KW-0663">Pyridoxal phosphate</keyword>
<keyword id="KW-1185">Reference proteome</keyword>